<organism>
    <name type="scientific">Escherichia coli (strain K12 / DH10B)</name>
    <dbReference type="NCBI Taxonomy" id="316385"/>
    <lineage>
        <taxon>Bacteria</taxon>
        <taxon>Pseudomonadati</taxon>
        <taxon>Pseudomonadota</taxon>
        <taxon>Gammaproteobacteria</taxon>
        <taxon>Enterobacterales</taxon>
        <taxon>Enterobacteriaceae</taxon>
        <taxon>Escherichia</taxon>
    </lineage>
</organism>
<accession>B1X9W2</accession>
<protein>
    <recommendedName>
        <fullName evidence="1">ATP synthase subunit alpha</fullName>
        <ecNumber evidence="1">7.1.2.2</ecNumber>
    </recommendedName>
    <alternativeName>
        <fullName evidence="1">ATP synthase F1 sector subunit alpha</fullName>
    </alternativeName>
    <alternativeName>
        <fullName evidence="1">F-ATPase subunit alpha</fullName>
    </alternativeName>
</protein>
<gene>
    <name evidence="1" type="primary">atpA</name>
    <name type="ordered locus">ECDH10B_3921</name>
</gene>
<dbReference type="EC" id="7.1.2.2" evidence="1"/>
<dbReference type="EMBL" id="CP000948">
    <property type="protein sequence ID" value="ACB04777.1"/>
    <property type="molecule type" value="Genomic_DNA"/>
</dbReference>
<dbReference type="RefSeq" id="WP_001176745.1">
    <property type="nucleotide sequence ID" value="NC_010473.1"/>
</dbReference>
<dbReference type="SMR" id="B1X9W2"/>
<dbReference type="GeneID" id="93778233"/>
<dbReference type="KEGG" id="ecd:ECDH10B_3921"/>
<dbReference type="HOGENOM" id="CLU_010091_2_1_6"/>
<dbReference type="GO" id="GO:0005886">
    <property type="term" value="C:plasma membrane"/>
    <property type="evidence" value="ECO:0007669"/>
    <property type="project" value="UniProtKB-SubCell"/>
</dbReference>
<dbReference type="GO" id="GO:0045259">
    <property type="term" value="C:proton-transporting ATP synthase complex"/>
    <property type="evidence" value="ECO:0007669"/>
    <property type="project" value="UniProtKB-KW"/>
</dbReference>
<dbReference type="GO" id="GO:0043531">
    <property type="term" value="F:ADP binding"/>
    <property type="evidence" value="ECO:0007669"/>
    <property type="project" value="TreeGrafter"/>
</dbReference>
<dbReference type="GO" id="GO:0005524">
    <property type="term" value="F:ATP binding"/>
    <property type="evidence" value="ECO:0007669"/>
    <property type="project" value="UniProtKB-UniRule"/>
</dbReference>
<dbReference type="GO" id="GO:0046933">
    <property type="term" value="F:proton-transporting ATP synthase activity, rotational mechanism"/>
    <property type="evidence" value="ECO:0007669"/>
    <property type="project" value="UniProtKB-UniRule"/>
</dbReference>
<dbReference type="CDD" id="cd18113">
    <property type="entry name" value="ATP-synt_F1_alpha_C"/>
    <property type="match status" value="1"/>
</dbReference>
<dbReference type="CDD" id="cd18116">
    <property type="entry name" value="ATP-synt_F1_alpha_N"/>
    <property type="match status" value="1"/>
</dbReference>
<dbReference type="CDD" id="cd01132">
    <property type="entry name" value="F1-ATPase_alpha_CD"/>
    <property type="match status" value="1"/>
</dbReference>
<dbReference type="FunFam" id="1.20.150.20:FF:000001">
    <property type="entry name" value="ATP synthase subunit alpha"/>
    <property type="match status" value="1"/>
</dbReference>
<dbReference type="FunFam" id="2.40.30.20:FF:000001">
    <property type="entry name" value="ATP synthase subunit alpha"/>
    <property type="match status" value="1"/>
</dbReference>
<dbReference type="FunFam" id="3.40.50.300:FF:000002">
    <property type="entry name" value="ATP synthase subunit alpha"/>
    <property type="match status" value="1"/>
</dbReference>
<dbReference type="Gene3D" id="2.40.30.20">
    <property type="match status" value="1"/>
</dbReference>
<dbReference type="Gene3D" id="1.20.150.20">
    <property type="entry name" value="ATP synthase alpha/beta chain, C-terminal domain"/>
    <property type="match status" value="1"/>
</dbReference>
<dbReference type="Gene3D" id="3.40.50.300">
    <property type="entry name" value="P-loop containing nucleotide triphosphate hydrolases"/>
    <property type="match status" value="1"/>
</dbReference>
<dbReference type="HAMAP" id="MF_01346">
    <property type="entry name" value="ATP_synth_alpha_bact"/>
    <property type="match status" value="1"/>
</dbReference>
<dbReference type="InterPro" id="IPR023366">
    <property type="entry name" value="ATP_synth_asu-like_sf"/>
</dbReference>
<dbReference type="InterPro" id="IPR000793">
    <property type="entry name" value="ATP_synth_asu_C"/>
</dbReference>
<dbReference type="InterPro" id="IPR038376">
    <property type="entry name" value="ATP_synth_asu_C_sf"/>
</dbReference>
<dbReference type="InterPro" id="IPR033732">
    <property type="entry name" value="ATP_synth_F1_a_nt-bd_dom"/>
</dbReference>
<dbReference type="InterPro" id="IPR005294">
    <property type="entry name" value="ATP_synth_F1_asu"/>
</dbReference>
<dbReference type="InterPro" id="IPR020003">
    <property type="entry name" value="ATPase_a/bsu_AS"/>
</dbReference>
<dbReference type="InterPro" id="IPR004100">
    <property type="entry name" value="ATPase_F1/V1/A1_a/bsu_N"/>
</dbReference>
<dbReference type="InterPro" id="IPR036121">
    <property type="entry name" value="ATPase_F1/V1/A1_a/bsu_N_sf"/>
</dbReference>
<dbReference type="InterPro" id="IPR000194">
    <property type="entry name" value="ATPase_F1/V1/A1_a/bsu_nucl-bd"/>
</dbReference>
<dbReference type="InterPro" id="IPR027417">
    <property type="entry name" value="P-loop_NTPase"/>
</dbReference>
<dbReference type="NCBIfam" id="TIGR00962">
    <property type="entry name" value="atpA"/>
    <property type="match status" value="1"/>
</dbReference>
<dbReference type="NCBIfam" id="NF009884">
    <property type="entry name" value="PRK13343.1"/>
    <property type="match status" value="1"/>
</dbReference>
<dbReference type="PANTHER" id="PTHR48082">
    <property type="entry name" value="ATP SYNTHASE SUBUNIT ALPHA, MITOCHONDRIAL"/>
    <property type="match status" value="1"/>
</dbReference>
<dbReference type="PANTHER" id="PTHR48082:SF2">
    <property type="entry name" value="ATP SYNTHASE SUBUNIT ALPHA, MITOCHONDRIAL"/>
    <property type="match status" value="1"/>
</dbReference>
<dbReference type="Pfam" id="PF00006">
    <property type="entry name" value="ATP-synt_ab"/>
    <property type="match status" value="1"/>
</dbReference>
<dbReference type="Pfam" id="PF00306">
    <property type="entry name" value="ATP-synt_ab_C"/>
    <property type="match status" value="1"/>
</dbReference>
<dbReference type="Pfam" id="PF02874">
    <property type="entry name" value="ATP-synt_ab_N"/>
    <property type="match status" value="1"/>
</dbReference>
<dbReference type="SUPFAM" id="SSF47917">
    <property type="entry name" value="C-terminal domain of alpha and beta subunits of F1 ATP synthase"/>
    <property type="match status" value="1"/>
</dbReference>
<dbReference type="SUPFAM" id="SSF50615">
    <property type="entry name" value="N-terminal domain of alpha and beta subunits of F1 ATP synthase"/>
    <property type="match status" value="1"/>
</dbReference>
<dbReference type="SUPFAM" id="SSF52540">
    <property type="entry name" value="P-loop containing nucleoside triphosphate hydrolases"/>
    <property type="match status" value="1"/>
</dbReference>
<dbReference type="PROSITE" id="PS00152">
    <property type="entry name" value="ATPASE_ALPHA_BETA"/>
    <property type="match status" value="1"/>
</dbReference>
<comment type="function">
    <text evidence="1">Produces ATP from ADP in the presence of a proton gradient across the membrane. The alpha chain is a regulatory subunit.</text>
</comment>
<comment type="catalytic activity">
    <reaction evidence="1">
        <text>ATP + H2O + 4 H(+)(in) = ADP + phosphate + 5 H(+)(out)</text>
        <dbReference type="Rhea" id="RHEA:57720"/>
        <dbReference type="ChEBI" id="CHEBI:15377"/>
        <dbReference type="ChEBI" id="CHEBI:15378"/>
        <dbReference type="ChEBI" id="CHEBI:30616"/>
        <dbReference type="ChEBI" id="CHEBI:43474"/>
        <dbReference type="ChEBI" id="CHEBI:456216"/>
        <dbReference type="EC" id="7.1.2.2"/>
    </reaction>
</comment>
<comment type="subunit">
    <text evidence="1">F-type ATPases have 2 components, CF(1) - the catalytic core - and CF(0) - the membrane proton channel. CF(1) has five subunits: alpha(3), beta(3), gamma(1), delta(1), epsilon(1). CF(0) has three main subunits: a(1), b(2) and c(9-12). The alpha and beta chains form an alternating ring which encloses part of the gamma chain. CF(1) is attached to CF(0) by a central stalk formed by the gamma and epsilon chains, while a peripheral stalk is formed by the delta and b chains.</text>
</comment>
<comment type="subcellular location">
    <subcellularLocation>
        <location evidence="1">Cell inner membrane</location>
        <topology evidence="1">Peripheral membrane protein</topology>
    </subcellularLocation>
</comment>
<comment type="similarity">
    <text evidence="1">Belongs to the ATPase alpha/beta chains family.</text>
</comment>
<sequence length="513" mass="55222">MQLNSTEISELIKQRIAQFNVVSEAHNEGTIVSVSDGVIRIHGLADCMQGEMISLPGNRYAIALNLERDSVGAVVMGPYADLAEGMKVKCTGRILEVPVGRGLLGRVVNTLGAPIDGKGPLDHDGFSAVEAIAPGVIERQSVDQPVQTGYKAVDSMIPIGRGQRELIIGDRQTGKTALAIDAIINQRDSGIKCIYVAIGQKASTISNVVRKLEEHGALANTIVVVATASESAALQYLAPYAGCAMGEYFRDRGEDALIIYDDLSKQAVAYRQISLLLRRPPGREAFPGDVFYLHSRLLERAARVNAEYVEAFTKGEVKGKTGSLTALPIIETQAGDVSAFVPTNVISITDGQIFLETNLFNAGIRPAVNPGISVSRVGGAAQTKIMKKLSGGIRTALAQYRELAAFSQFASDLDDATRKQLDHGQKVTELLKQKQYAPMSVAQQSLVLFAAERGYLADVELSKIGSFEAALLAYVDRDHAPLMQEINQTGGYNDEIEGKLKGILDSFKATQSW</sequence>
<keyword id="KW-0066">ATP synthesis</keyword>
<keyword id="KW-0067">ATP-binding</keyword>
<keyword id="KW-0997">Cell inner membrane</keyword>
<keyword id="KW-1003">Cell membrane</keyword>
<keyword id="KW-0139">CF(1)</keyword>
<keyword id="KW-0375">Hydrogen ion transport</keyword>
<keyword id="KW-0406">Ion transport</keyword>
<keyword id="KW-0472">Membrane</keyword>
<keyword id="KW-0547">Nucleotide-binding</keyword>
<keyword id="KW-1278">Translocase</keyword>
<keyword id="KW-0813">Transport</keyword>
<proteinExistence type="inferred from homology"/>
<feature type="chain" id="PRO_1000143376" description="ATP synthase subunit alpha">
    <location>
        <begin position="1"/>
        <end position="513"/>
    </location>
</feature>
<feature type="binding site" evidence="1">
    <location>
        <begin position="169"/>
        <end position="176"/>
    </location>
    <ligand>
        <name>ATP</name>
        <dbReference type="ChEBI" id="CHEBI:30616"/>
    </ligand>
</feature>
<feature type="site" description="Required for activity" evidence="1">
    <location>
        <position position="373"/>
    </location>
</feature>
<evidence type="ECO:0000255" key="1">
    <source>
        <dbReference type="HAMAP-Rule" id="MF_01346"/>
    </source>
</evidence>
<reference key="1">
    <citation type="journal article" date="2008" name="J. Bacteriol.">
        <title>The complete genome sequence of Escherichia coli DH10B: insights into the biology of a laboratory workhorse.</title>
        <authorList>
            <person name="Durfee T."/>
            <person name="Nelson R."/>
            <person name="Baldwin S."/>
            <person name="Plunkett G. III"/>
            <person name="Burland V."/>
            <person name="Mau B."/>
            <person name="Petrosino J.F."/>
            <person name="Qin X."/>
            <person name="Muzny D.M."/>
            <person name="Ayele M."/>
            <person name="Gibbs R.A."/>
            <person name="Csorgo B."/>
            <person name="Posfai G."/>
            <person name="Weinstock G.M."/>
            <person name="Blattner F.R."/>
        </authorList>
    </citation>
    <scope>NUCLEOTIDE SEQUENCE [LARGE SCALE GENOMIC DNA]</scope>
    <source>
        <strain>K12 / DH10B</strain>
    </source>
</reference>
<name>ATPA_ECODH</name>